<comment type="function">
    <text evidence="1">Catalyzes two activities which are involved in the cyclic version of arginine biosynthesis: the synthesis of N-acetylglutamate from glutamate and acetyl-CoA as the acetyl donor, and of ornithine by transacetylation between N(2)-acetylornithine and glutamate.</text>
</comment>
<comment type="catalytic activity">
    <reaction evidence="1">
        <text>N(2)-acetyl-L-ornithine + L-glutamate = N-acetyl-L-glutamate + L-ornithine</text>
        <dbReference type="Rhea" id="RHEA:15349"/>
        <dbReference type="ChEBI" id="CHEBI:29985"/>
        <dbReference type="ChEBI" id="CHEBI:44337"/>
        <dbReference type="ChEBI" id="CHEBI:46911"/>
        <dbReference type="ChEBI" id="CHEBI:57805"/>
        <dbReference type="EC" id="2.3.1.35"/>
    </reaction>
</comment>
<comment type="catalytic activity">
    <reaction evidence="1">
        <text>L-glutamate + acetyl-CoA = N-acetyl-L-glutamate + CoA + H(+)</text>
        <dbReference type="Rhea" id="RHEA:24292"/>
        <dbReference type="ChEBI" id="CHEBI:15378"/>
        <dbReference type="ChEBI" id="CHEBI:29985"/>
        <dbReference type="ChEBI" id="CHEBI:44337"/>
        <dbReference type="ChEBI" id="CHEBI:57287"/>
        <dbReference type="ChEBI" id="CHEBI:57288"/>
        <dbReference type="EC" id="2.3.1.1"/>
    </reaction>
</comment>
<comment type="pathway">
    <text evidence="1">Amino-acid biosynthesis; L-arginine biosynthesis; L-ornithine and N-acetyl-L-glutamate from L-glutamate and N(2)-acetyl-L-ornithine (cyclic): step 1/1.</text>
</comment>
<comment type="pathway">
    <text evidence="1">Amino-acid biosynthesis; L-arginine biosynthesis; N(2)-acetyl-L-ornithine from L-glutamate: step 1/4.</text>
</comment>
<comment type="subunit">
    <text evidence="1">Heterotetramer of two alpha and two beta chains.</text>
</comment>
<comment type="subcellular location">
    <subcellularLocation>
        <location evidence="1">Cytoplasm</location>
    </subcellularLocation>
</comment>
<comment type="similarity">
    <text evidence="1">Belongs to the ArgJ family.</text>
</comment>
<feature type="chain" id="PRO_0000002205" description="Arginine biosynthesis bifunctional protein ArgJ alpha chain" evidence="1">
    <location>
        <begin position="1"/>
        <end position="193"/>
    </location>
</feature>
<feature type="chain" id="PRO_0000002206" description="Arginine biosynthesis bifunctional protein ArgJ beta chain" evidence="1">
    <location>
        <begin position="194"/>
        <end position="407"/>
    </location>
</feature>
<feature type="active site" description="Nucleophile" evidence="1">
    <location>
        <position position="194"/>
    </location>
</feature>
<feature type="binding site" evidence="1">
    <location>
        <position position="157"/>
    </location>
    <ligand>
        <name>substrate</name>
    </ligand>
</feature>
<feature type="binding site" evidence="1">
    <location>
        <position position="183"/>
    </location>
    <ligand>
        <name>substrate</name>
    </ligand>
</feature>
<feature type="binding site" evidence="1">
    <location>
        <position position="194"/>
    </location>
    <ligand>
        <name>substrate</name>
    </ligand>
</feature>
<feature type="binding site" evidence="1">
    <location>
        <position position="280"/>
    </location>
    <ligand>
        <name>substrate</name>
    </ligand>
</feature>
<feature type="binding site" evidence="1">
    <location>
        <position position="402"/>
    </location>
    <ligand>
        <name>substrate</name>
    </ligand>
</feature>
<feature type="binding site" evidence="1">
    <location>
        <position position="407"/>
    </location>
    <ligand>
        <name>substrate</name>
    </ligand>
</feature>
<feature type="site" description="Involved in the stabilization of negative charge on the oxyanion by the formation of the oxyanion hole" evidence="1">
    <location>
        <position position="122"/>
    </location>
</feature>
<feature type="site" description="Involved in the stabilization of negative charge on the oxyanion by the formation of the oxyanion hole" evidence="1">
    <location>
        <position position="123"/>
    </location>
</feature>
<feature type="site" description="Cleavage; by autolysis" evidence="1">
    <location>
        <begin position="193"/>
        <end position="194"/>
    </location>
</feature>
<accession>Q8CUN1</accession>
<sequence length="407" mass="43893">METTTVKEISILKNGHVTSPSGFYAGGVHCGLRRKKLDLGWIYSDTPASAAGVYTQNTFQAAPLLITKHTIEHSKQIQSIIVNSANANSFTGKQGYEDALLMQKLVANQLNIEQHHVAVASTGVIGERLPMDKVRNGIRQLSHTQVDAESFEKAILTTDTSTKHVAVQVEIDGKLVTIGGAAKGSGMIHPNMATMLSFITTDANVNQDSLQQALRKVTDQSYNQITVDGDSSTNDMVLVLANGRAENNELNESHPEWSVFMDAWNIVAIELAKMIARDGEGATKLIEVIVKGASTNQQASQIAKAVISSNLVKTAIYGNDANWGRIIGAIGYSGVPVEASKLSIAIGGIQVVNNGEPIDFDEKDCKQALNQETVNIVIDLQSGMDTATAWGCDLTYDYIRINASYRT</sequence>
<reference key="1">
    <citation type="journal article" date="2002" name="Nucleic Acids Res.">
        <title>Genome sequence of Oceanobacillus iheyensis isolated from the Iheya Ridge and its unexpected adaptive capabilities to extreme environments.</title>
        <authorList>
            <person name="Takami H."/>
            <person name="Takaki Y."/>
            <person name="Uchiyama I."/>
        </authorList>
    </citation>
    <scope>NUCLEOTIDE SEQUENCE [LARGE SCALE GENOMIC DNA]</scope>
    <source>
        <strain>DSM 14371 / CIP 107618 / JCM 11309 / KCTC 3954 / HTE831</strain>
    </source>
</reference>
<protein>
    <recommendedName>
        <fullName evidence="1">Arginine biosynthesis bifunctional protein ArgJ</fullName>
    </recommendedName>
    <domain>
        <recommendedName>
            <fullName evidence="1">Glutamate N-acetyltransferase</fullName>
            <ecNumber evidence="1">2.3.1.35</ecNumber>
        </recommendedName>
        <alternativeName>
            <fullName evidence="1">Ornithine acetyltransferase</fullName>
            <shortName evidence="1">OATase</shortName>
        </alternativeName>
        <alternativeName>
            <fullName evidence="1">Ornithine transacetylase</fullName>
        </alternativeName>
    </domain>
    <domain>
        <recommendedName>
            <fullName evidence="1">Amino-acid acetyltransferase</fullName>
            <ecNumber evidence="1">2.3.1.1</ecNumber>
        </recommendedName>
        <alternativeName>
            <fullName evidence="1">N-acetylglutamate synthase</fullName>
            <shortName evidence="1">AGSase</shortName>
        </alternativeName>
    </domain>
    <component>
        <recommendedName>
            <fullName evidence="1">Arginine biosynthesis bifunctional protein ArgJ alpha chain</fullName>
        </recommendedName>
    </component>
    <component>
        <recommendedName>
            <fullName evidence="1">Arginine biosynthesis bifunctional protein ArgJ beta chain</fullName>
        </recommendedName>
    </component>
</protein>
<evidence type="ECO:0000255" key="1">
    <source>
        <dbReference type="HAMAP-Rule" id="MF_01106"/>
    </source>
</evidence>
<organism>
    <name type="scientific">Oceanobacillus iheyensis (strain DSM 14371 / CIP 107618 / JCM 11309 / KCTC 3954 / HTE831)</name>
    <dbReference type="NCBI Taxonomy" id="221109"/>
    <lineage>
        <taxon>Bacteria</taxon>
        <taxon>Bacillati</taxon>
        <taxon>Bacillota</taxon>
        <taxon>Bacilli</taxon>
        <taxon>Bacillales</taxon>
        <taxon>Bacillaceae</taxon>
        <taxon>Oceanobacillus</taxon>
    </lineage>
</organism>
<keyword id="KW-0012">Acyltransferase</keyword>
<keyword id="KW-0028">Amino-acid biosynthesis</keyword>
<keyword id="KW-0055">Arginine biosynthesis</keyword>
<keyword id="KW-0068">Autocatalytic cleavage</keyword>
<keyword id="KW-0963">Cytoplasm</keyword>
<keyword id="KW-0511">Multifunctional enzyme</keyword>
<keyword id="KW-1185">Reference proteome</keyword>
<keyword id="KW-0808">Transferase</keyword>
<dbReference type="EC" id="2.3.1.35" evidence="1"/>
<dbReference type="EC" id="2.3.1.1" evidence="1"/>
<dbReference type="EMBL" id="BA000028">
    <property type="protein sequence ID" value="BAC13032.1"/>
    <property type="molecule type" value="Genomic_DNA"/>
</dbReference>
<dbReference type="RefSeq" id="WP_011065477.1">
    <property type="nucleotide sequence ID" value="NC_004193.1"/>
</dbReference>
<dbReference type="SMR" id="Q8CUN1"/>
<dbReference type="STRING" id="221109.gene:10733314"/>
<dbReference type="MEROPS" id="T05.002"/>
<dbReference type="KEGG" id="oih:OB1076"/>
<dbReference type="eggNOG" id="COG1364">
    <property type="taxonomic scope" value="Bacteria"/>
</dbReference>
<dbReference type="HOGENOM" id="CLU_027172_1_0_9"/>
<dbReference type="OrthoDB" id="9804242at2"/>
<dbReference type="PhylomeDB" id="Q8CUN1"/>
<dbReference type="UniPathway" id="UPA00068">
    <property type="reaction ID" value="UER00106"/>
</dbReference>
<dbReference type="UniPathway" id="UPA00068">
    <property type="reaction ID" value="UER00111"/>
</dbReference>
<dbReference type="Proteomes" id="UP000000822">
    <property type="component" value="Chromosome"/>
</dbReference>
<dbReference type="GO" id="GO:0005737">
    <property type="term" value="C:cytoplasm"/>
    <property type="evidence" value="ECO:0007669"/>
    <property type="project" value="UniProtKB-SubCell"/>
</dbReference>
<dbReference type="GO" id="GO:0004358">
    <property type="term" value="F:glutamate N-acetyltransferase activity"/>
    <property type="evidence" value="ECO:0007669"/>
    <property type="project" value="UniProtKB-UniRule"/>
</dbReference>
<dbReference type="GO" id="GO:0004042">
    <property type="term" value="F:L-glutamate N-acetyltransferase activity"/>
    <property type="evidence" value="ECO:0007669"/>
    <property type="project" value="UniProtKB-UniRule"/>
</dbReference>
<dbReference type="GO" id="GO:0006526">
    <property type="term" value="P:L-arginine biosynthetic process"/>
    <property type="evidence" value="ECO:0007669"/>
    <property type="project" value="UniProtKB-UniRule"/>
</dbReference>
<dbReference type="GO" id="GO:0006592">
    <property type="term" value="P:ornithine biosynthetic process"/>
    <property type="evidence" value="ECO:0007669"/>
    <property type="project" value="TreeGrafter"/>
</dbReference>
<dbReference type="CDD" id="cd02152">
    <property type="entry name" value="OAT"/>
    <property type="match status" value="1"/>
</dbReference>
<dbReference type="FunFam" id="3.10.20.340:FF:000001">
    <property type="entry name" value="Arginine biosynthesis bifunctional protein ArgJ, chloroplastic"/>
    <property type="match status" value="1"/>
</dbReference>
<dbReference type="FunFam" id="3.60.70.12:FF:000001">
    <property type="entry name" value="Arginine biosynthesis bifunctional protein ArgJ, chloroplastic"/>
    <property type="match status" value="1"/>
</dbReference>
<dbReference type="FunFam" id="3.30.2330.10:FF:000001">
    <property type="entry name" value="Arginine biosynthesis bifunctional protein ArgJ, mitochondrial"/>
    <property type="match status" value="1"/>
</dbReference>
<dbReference type="Gene3D" id="3.30.2330.10">
    <property type="entry name" value="arginine biosynthesis bifunctional protein suprefamily"/>
    <property type="match status" value="1"/>
</dbReference>
<dbReference type="Gene3D" id="3.10.20.340">
    <property type="entry name" value="ArgJ beta chain, C-terminal domain"/>
    <property type="match status" value="1"/>
</dbReference>
<dbReference type="Gene3D" id="3.60.70.12">
    <property type="entry name" value="L-amino peptidase D-ALA esterase/amidase"/>
    <property type="match status" value="1"/>
</dbReference>
<dbReference type="HAMAP" id="MF_01106">
    <property type="entry name" value="ArgJ"/>
    <property type="match status" value="1"/>
</dbReference>
<dbReference type="InterPro" id="IPR002813">
    <property type="entry name" value="Arg_biosynth_ArgJ"/>
</dbReference>
<dbReference type="InterPro" id="IPR016117">
    <property type="entry name" value="ArgJ-like_dom_sf"/>
</dbReference>
<dbReference type="InterPro" id="IPR042195">
    <property type="entry name" value="ArgJ_beta_C"/>
</dbReference>
<dbReference type="NCBIfam" id="TIGR00120">
    <property type="entry name" value="ArgJ"/>
    <property type="match status" value="1"/>
</dbReference>
<dbReference type="NCBIfam" id="NF003802">
    <property type="entry name" value="PRK05388.1"/>
    <property type="match status" value="1"/>
</dbReference>
<dbReference type="PANTHER" id="PTHR23100">
    <property type="entry name" value="ARGININE BIOSYNTHESIS BIFUNCTIONAL PROTEIN ARGJ"/>
    <property type="match status" value="1"/>
</dbReference>
<dbReference type="PANTHER" id="PTHR23100:SF0">
    <property type="entry name" value="ARGININE BIOSYNTHESIS BIFUNCTIONAL PROTEIN ARGJ, MITOCHONDRIAL"/>
    <property type="match status" value="1"/>
</dbReference>
<dbReference type="Pfam" id="PF01960">
    <property type="entry name" value="ArgJ"/>
    <property type="match status" value="1"/>
</dbReference>
<dbReference type="SUPFAM" id="SSF56266">
    <property type="entry name" value="DmpA/ArgJ-like"/>
    <property type="match status" value="1"/>
</dbReference>
<gene>
    <name evidence="1" type="primary">argJ</name>
    <name type="ordered locus">OB1076</name>
</gene>
<name>ARGJ_OCEIH</name>
<proteinExistence type="inferred from homology"/>